<organism>
    <name type="scientific">Clostridium perfringens (strain ATCC 13124 / DSM 756 / JCM 1290 / NCIMB 6125 / NCTC 8237 / Type A)</name>
    <dbReference type="NCBI Taxonomy" id="195103"/>
    <lineage>
        <taxon>Bacteria</taxon>
        <taxon>Bacillati</taxon>
        <taxon>Bacillota</taxon>
        <taxon>Clostridia</taxon>
        <taxon>Eubacteriales</taxon>
        <taxon>Clostridiaceae</taxon>
        <taxon>Clostridium</taxon>
    </lineage>
</organism>
<keyword id="KW-0004">4Fe-4S</keyword>
<keyword id="KW-0408">Iron</keyword>
<keyword id="KW-0411">Iron-sulfur</keyword>
<keyword id="KW-0414">Isoprene biosynthesis</keyword>
<keyword id="KW-0479">Metal-binding</keyword>
<keyword id="KW-0560">Oxidoreductase</keyword>
<proteinExistence type="inferred from homology"/>
<gene>
    <name evidence="1" type="primary">ispH</name>
    <name type="ordered locus">CPF_1341</name>
</gene>
<protein>
    <recommendedName>
        <fullName evidence="1">4-hydroxy-3-methylbut-2-enyl diphosphate reductase</fullName>
        <shortName evidence="1">HMBPP reductase</shortName>
        <ecNumber evidence="1">1.17.7.4</ecNumber>
    </recommendedName>
</protein>
<comment type="function">
    <text evidence="1">Catalyzes the conversion of 1-hydroxy-2-methyl-2-(E)-butenyl 4-diphosphate (HMBPP) into a mixture of isopentenyl diphosphate (IPP) and dimethylallyl diphosphate (DMAPP). Acts in the terminal step of the DOXP/MEP pathway for isoprenoid precursor biosynthesis.</text>
</comment>
<comment type="catalytic activity">
    <reaction evidence="1">
        <text>isopentenyl diphosphate + 2 oxidized [2Fe-2S]-[ferredoxin] + H2O = (2E)-4-hydroxy-3-methylbut-2-enyl diphosphate + 2 reduced [2Fe-2S]-[ferredoxin] + 2 H(+)</text>
        <dbReference type="Rhea" id="RHEA:24488"/>
        <dbReference type="Rhea" id="RHEA-COMP:10000"/>
        <dbReference type="Rhea" id="RHEA-COMP:10001"/>
        <dbReference type="ChEBI" id="CHEBI:15377"/>
        <dbReference type="ChEBI" id="CHEBI:15378"/>
        <dbReference type="ChEBI" id="CHEBI:33737"/>
        <dbReference type="ChEBI" id="CHEBI:33738"/>
        <dbReference type="ChEBI" id="CHEBI:128753"/>
        <dbReference type="ChEBI" id="CHEBI:128769"/>
        <dbReference type="EC" id="1.17.7.4"/>
    </reaction>
</comment>
<comment type="catalytic activity">
    <reaction evidence="1">
        <text>dimethylallyl diphosphate + 2 oxidized [2Fe-2S]-[ferredoxin] + H2O = (2E)-4-hydroxy-3-methylbut-2-enyl diphosphate + 2 reduced [2Fe-2S]-[ferredoxin] + 2 H(+)</text>
        <dbReference type="Rhea" id="RHEA:24825"/>
        <dbReference type="Rhea" id="RHEA-COMP:10000"/>
        <dbReference type="Rhea" id="RHEA-COMP:10001"/>
        <dbReference type="ChEBI" id="CHEBI:15377"/>
        <dbReference type="ChEBI" id="CHEBI:15378"/>
        <dbReference type="ChEBI" id="CHEBI:33737"/>
        <dbReference type="ChEBI" id="CHEBI:33738"/>
        <dbReference type="ChEBI" id="CHEBI:57623"/>
        <dbReference type="ChEBI" id="CHEBI:128753"/>
        <dbReference type="EC" id="1.17.7.4"/>
    </reaction>
</comment>
<comment type="cofactor">
    <cofactor evidence="1">
        <name>[4Fe-4S] cluster</name>
        <dbReference type="ChEBI" id="CHEBI:49883"/>
    </cofactor>
    <text evidence="1">Binds 1 [4Fe-4S] cluster per subunit.</text>
</comment>
<comment type="pathway">
    <text evidence="1">Isoprenoid biosynthesis; dimethylallyl diphosphate biosynthesis; dimethylallyl diphosphate from (2E)-4-hydroxy-3-methylbutenyl diphosphate: step 1/1.</text>
</comment>
<comment type="pathway">
    <text evidence="1">Isoprenoid biosynthesis; isopentenyl diphosphate biosynthesis via DXP pathway; isopentenyl diphosphate from 1-deoxy-D-xylulose 5-phosphate: step 6/6.</text>
</comment>
<comment type="similarity">
    <text evidence="1">Belongs to the IspH family.</text>
</comment>
<accession>Q0TRF3</accession>
<reference key="1">
    <citation type="journal article" date="2006" name="Genome Res.">
        <title>Skewed genomic variability in strains of the toxigenic bacterial pathogen, Clostridium perfringens.</title>
        <authorList>
            <person name="Myers G.S.A."/>
            <person name="Rasko D.A."/>
            <person name="Cheung J.K."/>
            <person name="Ravel J."/>
            <person name="Seshadri R."/>
            <person name="DeBoy R.T."/>
            <person name="Ren Q."/>
            <person name="Varga J."/>
            <person name="Awad M.M."/>
            <person name="Brinkac L.M."/>
            <person name="Daugherty S.C."/>
            <person name="Haft D.H."/>
            <person name="Dodson R.J."/>
            <person name="Madupu R."/>
            <person name="Nelson W.C."/>
            <person name="Rosovitz M.J."/>
            <person name="Sullivan S.A."/>
            <person name="Khouri H."/>
            <person name="Dimitrov G.I."/>
            <person name="Watkins K.L."/>
            <person name="Mulligan S."/>
            <person name="Benton J."/>
            <person name="Radune D."/>
            <person name="Fisher D.J."/>
            <person name="Atkins H.S."/>
            <person name="Hiscox T."/>
            <person name="Jost B.H."/>
            <person name="Billington S.J."/>
            <person name="Songer J.G."/>
            <person name="McClane B.A."/>
            <person name="Titball R.W."/>
            <person name="Rood J.I."/>
            <person name="Melville S.B."/>
            <person name="Paulsen I.T."/>
        </authorList>
    </citation>
    <scope>NUCLEOTIDE SEQUENCE [LARGE SCALE GENOMIC DNA]</scope>
    <source>
        <strain>ATCC 13124 / DSM 756 / JCM 1290 / NCIMB 6125 / NCTC 8237 / S 107 / Type A</strain>
    </source>
</reference>
<dbReference type="EC" id="1.17.7.4" evidence="1"/>
<dbReference type="EMBL" id="CP000246">
    <property type="protein sequence ID" value="ABG83019.1"/>
    <property type="molecule type" value="Genomic_DNA"/>
</dbReference>
<dbReference type="RefSeq" id="WP_003460702.1">
    <property type="nucleotide sequence ID" value="NC_008261.1"/>
</dbReference>
<dbReference type="SMR" id="Q0TRF3"/>
<dbReference type="STRING" id="195103.CPF_1341"/>
<dbReference type="PaxDb" id="195103-CPF_1341"/>
<dbReference type="KEGG" id="cpf:CPF_1341"/>
<dbReference type="eggNOG" id="COG0761">
    <property type="taxonomic scope" value="Bacteria"/>
</dbReference>
<dbReference type="HOGENOM" id="CLU_027486_0_1_9"/>
<dbReference type="UniPathway" id="UPA00056">
    <property type="reaction ID" value="UER00097"/>
</dbReference>
<dbReference type="UniPathway" id="UPA00059">
    <property type="reaction ID" value="UER00105"/>
</dbReference>
<dbReference type="Proteomes" id="UP000001823">
    <property type="component" value="Chromosome"/>
</dbReference>
<dbReference type="GO" id="GO:0051539">
    <property type="term" value="F:4 iron, 4 sulfur cluster binding"/>
    <property type="evidence" value="ECO:0007669"/>
    <property type="project" value="UniProtKB-UniRule"/>
</dbReference>
<dbReference type="GO" id="GO:0051745">
    <property type="term" value="F:4-hydroxy-3-methylbut-2-enyl diphosphate reductase activity"/>
    <property type="evidence" value="ECO:0007669"/>
    <property type="project" value="UniProtKB-UniRule"/>
</dbReference>
<dbReference type="GO" id="GO:0046872">
    <property type="term" value="F:metal ion binding"/>
    <property type="evidence" value="ECO:0007669"/>
    <property type="project" value="UniProtKB-KW"/>
</dbReference>
<dbReference type="GO" id="GO:0050992">
    <property type="term" value="P:dimethylallyl diphosphate biosynthetic process"/>
    <property type="evidence" value="ECO:0007669"/>
    <property type="project" value="UniProtKB-UniRule"/>
</dbReference>
<dbReference type="GO" id="GO:0019288">
    <property type="term" value="P:isopentenyl diphosphate biosynthetic process, methylerythritol 4-phosphate pathway"/>
    <property type="evidence" value="ECO:0007669"/>
    <property type="project" value="UniProtKB-UniRule"/>
</dbReference>
<dbReference type="GO" id="GO:0016114">
    <property type="term" value="P:terpenoid biosynthetic process"/>
    <property type="evidence" value="ECO:0007669"/>
    <property type="project" value="UniProtKB-UniRule"/>
</dbReference>
<dbReference type="CDD" id="cd13944">
    <property type="entry name" value="lytB_ispH"/>
    <property type="match status" value="1"/>
</dbReference>
<dbReference type="Gene3D" id="3.40.50.11270">
    <property type="match status" value="1"/>
</dbReference>
<dbReference type="Gene3D" id="3.40.1010.20">
    <property type="entry name" value="4-hydroxy-3-methylbut-2-enyl diphosphate reductase, catalytic domain"/>
    <property type="match status" value="2"/>
</dbReference>
<dbReference type="HAMAP" id="MF_00191">
    <property type="entry name" value="IspH"/>
    <property type="match status" value="1"/>
</dbReference>
<dbReference type="InterPro" id="IPR003451">
    <property type="entry name" value="LytB/IspH"/>
</dbReference>
<dbReference type="NCBIfam" id="TIGR00216">
    <property type="entry name" value="ispH_lytB"/>
    <property type="match status" value="1"/>
</dbReference>
<dbReference type="NCBIfam" id="NF002187">
    <property type="entry name" value="PRK01045.1-1"/>
    <property type="match status" value="1"/>
</dbReference>
<dbReference type="NCBIfam" id="NF009024">
    <property type="entry name" value="PRK12360.1"/>
    <property type="match status" value="1"/>
</dbReference>
<dbReference type="PANTHER" id="PTHR30426">
    <property type="entry name" value="4-HYDROXY-3-METHYLBUT-2-ENYL DIPHOSPHATE REDUCTASE"/>
    <property type="match status" value="1"/>
</dbReference>
<dbReference type="PANTHER" id="PTHR30426:SF0">
    <property type="entry name" value="4-HYDROXY-3-METHYLBUT-2-ENYL DIPHOSPHATE REDUCTASE"/>
    <property type="match status" value="1"/>
</dbReference>
<dbReference type="Pfam" id="PF02401">
    <property type="entry name" value="LYTB"/>
    <property type="match status" value="1"/>
</dbReference>
<evidence type="ECO:0000255" key="1">
    <source>
        <dbReference type="HAMAP-Rule" id="MF_00191"/>
    </source>
</evidence>
<feature type="chain" id="PRO_1000021106" description="4-hydroxy-3-methylbut-2-enyl diphosphate reductase">
    <location>
        <begin position="1"/>
        <end position="282"/>
    </location>
</feature>
<feature type="active site" description="Proton donor" evidence="1">
    <location>
        <position position="130"/>
    </location>
</feature>
<feature type="binding site" evidence="1">
    <location>
        <position position="14"/>
    </location>
    <ligand>
        <name>[4Fe-4S] cluster</name>
        <dbReference type="ChEBI" id="CHEBI:49883"/>
    </ligand>
</feature>
<feature type="binding site" evidence="1">
    <location>
        <position position="43"/>
    </location>
    <ligand>
        <name>(2E)-4-hydroxy-3-methylbut-2-enyl diphosphate</name>
        <dbReference type="ChEBI" id="CHEBI:128753"/>
    </ligand>
</feature>
<feature type="binding site" evidence="1">
    <location>
        <position position="43"/>
    </location>
    <ligand>
        <name>dimethylallyl diphosphate</name>
        <dbReference type="ChEBI" id="CHEBI:57623"/>
    </ligand>
</feature>
<feature type="binding site" evidence="1">
    <location>
        <position position="43"/>
    </location>
    <ligand>
        <name>isopentenyl diphosphate</name>
        <dbReference type="ChEBI" id="CHEBI:128769"/>
    </ligand>
</feature>
<feature type="binding site" evidence="1">
    <location>
        <position position="78"/>
    </location>
    <ligand>
        <name>(2E)-4-hydroxy-3-methylbut-2-enyl diphosphate</name>
        <dbReference type="ChEBI" id="CHEBI:128753"/>
    </ligand>
</feature>
<feature type="binding site" evidence="1">
    <location>
        <position position="78"/>
    </location>
    <ligand>
        <name>dimethylallyl diphosphate</name>
        <dbReference type="ChEBI" id="CHEBI:57623"/>
    </ligand>
</feature>
<feature type="binding site" evidence="1">
    <location>
        <position position="78"/>
    </location>
    <ligand>
        <name>isopentenyl diphosphate</name>
        <dbReference type="ChEBI" id="CHEBI:128769"/>
    </ligand>
</feature>
<feature type="binding site" evidence="1">
    <location>
        <position position="100"/>
    </location>
    <ligand>
        <name>[4Fe-4S] cluster</name>
        <dbReference type="ChEBI" id="CHEBI:49883"/>
    </ligand>
</feature>
<feature type="binding site" evidence="1">
    <location>
        <position position="128"/>
    </location>
    <ligand>
        <name>(2E)-4-hydroxy-3-methylbut-2-enyl diphosphate</name>
        <dbReference type="ChEBI" id="CHEBI:128753"/>
    </ligand>
</feature>
<feature type="binding site" evidence="1">
    <location>
        <position position="128"/>
    </location>
    <ligand>
        <name>dimethylallyl diphosphate</name>
        <dbReference type="ChEBI" id="CHEBI:57623"/>
    </ligand>
</feature>
<feature type="binding site" evidence="1">
    <location>
        <position position="128"/>
    </location>
    <ligand>
        <name>isopentenyl diphosphate</name>
        <dbReference type="ChEBI" id="CHEBI:128769"/>
    </ligand>
</feature>
<feature type="binding site" evidence="1">
    <location>
        <position position="164"/>
    </location>
    <ligand>
        <name>(2E)-4-hydroxy-3-methylbut-2-enyl diphosphate</name>
        <dbReference type="ChEBI" id="CHEBI:128753"/>
    </ligand>
</feature>
<feature type="binding site" evidence="1">
    <location>
        <position position="192"/>
    </location>
    <ligand>
        <name>[4Fe-4S] cluster</name>
        <dbReference type="ChEBI" id="CHEBI:49883"/>
    </ligand>
</feature>
<feature type="binding site" evidence="1">
    <location>
        <position position="220"/>
    </location>
    <ligand>
        <name>(2E)-4-hydroxy-3-methylbut-2-enyl diphosphate</name>
        <dbReference type="ChEBI" id="CHEBI:128753"/>
    </ligand>
</feature>
<feature type="binding site" evidence="1">
    <location>
        <position position="220"/>
    </location>
    <ligand>
        <name>dimethylallyl diphosphate</name>
        <dbReference type="ChEBI" id="CHEBI:57623"/>
    </ligand>
</feature>
<feature type="binding site" evidence="1">
    <location>
        <position position="220"/>
    </location>
    <ligand>
        <name>isopentenyl diphosphate</name>
        <dbReference type="ChEBI" id="CHEBI:128769"/>
    </ligand>
</feature>
<feature type="binding site" evidence="1">
    <location>
        <position position="221"/>
    </location>
    <ligand>
        <name>(2E)-4-hydroxy-3-methylbut-2-enyl diphosphate</name>
        <dbReference type="ChEBI" id="CHEBI:128753"/>
    </ligand>
</feature>
<feature type="binding site" evidence="1">
    <location>
        <position position="221"/>
    </location>
    <ligand>
        <name>dimethylallyl diphosphate</name>
        <dbReference type="ChEBI" id="CHEBI:57623"/>
    </ligand>
</feature>
<feature type="binding site" evidence="1">
    <location>
        <position position="221"/>
    </location>
    <ligand>
        <name>isopentenyl diphosphate</name>
        <dbReference type="ChEBI" id="CHEBI:128769"/>
    </ligand>
</feature>
<feature type="binding site" evidence="1">
    <location>
        <position position="222"/>
    </location>
    <ligand>
        <name>(2E)-4-hydroxy-3-methylbut-2-enyl diphosphate</name>
        <dbReference type="ChEBI" id="CHEBI:128753"/>
    </ligand>
</feature>
<feature type="binding site" evidence="1">
    <location>
        <position position="222"/>
    </location>
    <ligand>
        <name>dimethylallyl diphosphate</name>
        <dbReference type="ChEBI" id="CHEBI:57623"/>
    </ligand>
</feature>
<feature type="binding site" evidence="1">
    <location>
        <position position="222"/>
    </location>
    <ligand>
        <name>isopentenyl diphosphate</name>
        <dbReference type="ChEBI" id="CHEBI:128769"/>
    </ligand>
</feature>
<feature type="binding site" evidence="1">
    <location>
        <position position="266"/>
    </location>
    <ligand>
        <name>(2E)-4-hydroxy-3-methylbut-2-enyl diphosphate</name>
        <dbReference type="ChEBI" id="CHEBI:128753"/>
    </ligand>
</feature>
<feature type="binding site" evidence="1">
    <location>
        <position position="266"/>
    </location>
    <ligand>
        <name>dimethylallyl diphosphate</name>
        <dbReference type="ChEBI" id="CHEBI:57623"/>
    </ligand>
</feature>
<feature type="binding site" evidence="1">
    <location>
        <position position="266"/>
    </location>
    <ligand>
        <name>isopentenyl diphosphate</name>
        <dbReference type="ChEBI" id="CHEBI:128769"/>
    </ligand>
</feature>
<sequence>MERNVILAKNAGFCFGVKRAVDEAIKYQKEFGKKIYTLGPLIHNNDVVNYLEDNDIFAIELSDADSLKKGDVVLIRSHGVKESVIKDLTDKGLIVKNATCPYVTNIQLKVKKCYEQGYKIIIVGDENHPEVIGINGWCNDSAIITNGKTELENIPAKVCVVSQTTEKKETWNKVLNEIVRASKEIVAFNTICSATDVRQKSVQELSKEADLVFVIGGKNSSNTTKLYEICKKECPKSYHIENVKELDESLLEDESVKTIGITAGASTPDWIINEVISKIKEL</sequence>
<name>ISPH_CLOP1</name>